<reference evidence="6" key="1">
    <citation type="journal article" date="2007" name="Nature">
        <title>Evolution of genes and genomes on the Drosophila phylogeny.</title>
        <authorList>
            <consortium name="Drosophila 12 genomes consortium"/>
        </authorList>
    </citation>
    <scope>NUCLEOTIDE SEQUENCE [LARGE SCALE GENOMIC DNA]</scope>
    <source>
        <strain evidence="6">Tucson 14024-0371.13</strain>
    </source>
</reference>
<gene>
    <name evidence="1" type="primary">Eaf</name>
    <name type="ORF">GF12230</name>
</gene>
<organism>
    <name type="scientific">Drosophila ananassae</name>
    <name type="common">Fruit fly</name>
    <dbReference type="NCBI Taxonomy" id="7217"/>
    <lineage>
        <taxon>Eukaryota</taxon>
        <taxon>Metazoa</taxon>
        <taxon>Ecdysozoa</taxon>
        <taxon>Arthropoda</taxon>
        <taxon>Hexapoda</taxon>
        <taxon>Insecta</taxon>
        <taxon>Pterygota</taxon>
        <taxon>Neoptera</taxon>
        <taxon>Endopterygota</taxon>
        <taxon>Diptera</taxon>
        <taxon>Brachycera</taxon>
        <taxon>Muscomorpha</taxon>
        <taxon>Ephydroidea</taxon>
        <taxon>Drosophilidae</taxon>
        <taxon>Drosophila</taxon>
        <taxon>Sophophora</taxon>
    </lineage>
</organism>
<comment type="function">
    <text evidence="1">Promotes transcriptional elongation by Su(Tpl)/ELL. Essential for development (By similarity).</text>
</comment>
<comment type="subcellular location">
    <subcellularLocation>
        <location evidence="2">Nucleus</location>
    </subcellularLocation>
</comment>
<comment type="similarity">
    <text evidence="3">Belongs to the EAF family.</text>
</comment>
<comment type="sequence caution" evidence="5">
    <conflict type="erroneous gene model prediction">
        <sequence resource="EMBL-CDS" id="EDV35917"/>
    </conflict>
</comment>
<feature type="chain" id="PRO_0000386598" description="Ell-associated factor Eaf">
    <location>
        <begin position="1"/>
        <end position="503"/>
    </location>
</feature>
<feature type="region of interest" description="Disordered" evidence="4">
    <location>
        <begin position="143"/>
        <end position="223"/>
    </location>
</feature>
<feature type="region of interest" description="Disordered" evidence="4">
    <location>
        <begin position="251"/>
        <end position="503"/>
    </location>
</feature>
<feature type="compositionally biased region" description="Polar residues" evidence="4">
    <location>
        <begin position="143"/>
        <end position="158"/>
    </location>
</feature>
<feature type="compositionally biased region" description="Polar residues" evidence="4">
    <location>
        <begin position="170"/>
        <end position="189"/>
    </location>
</feature>
<feature type="compositionally biased region" description="Polar residues" evidence="4">
    <location>
        <begin position="251"/>
        <end position="264"/>
    </location>
</feature>
<feature type="compositionally biased region" description="Basic residues" evidence="4">
    <location>
        <begin position="281"/>
        <end position="296"/>
    </location>
</feature>
<feature type="compositionally biased region" description="Polar residues" evidence="4">
    <location>
        <begin position="297"/>
        <end position="311"/>
    </location>
</feature>
<feature type="compositionally biased region" description="Low complexity" evidence="4">
    <location>
        <begin position="312"/>
        <end position="326"/>
    </location>
</feature>
<feature type="compositionally biased region" description="Acidic residues" evidence="4">
    <location>
        <begin position="382"/>
        <end position="397"/>
    </location>
</feature>
<feature type="compositionally biased region" description="Low complexity" evidence="4">
    <location>
        <begin position="415"/>
        <end position="435"/>
    </location>
</feature>
<feature type="compositionally biased region" description="Low complexity" evidence="4">
    <location>
        <begin position="484"/>
        <end position="497"/>
    </location>
</feature>
<feature type="modified residue" description="Phosphoserine" evidence="1">
    <location>
        <position position="199"/>
    </location>
</feature>
<accession>B3MI72</accession>
<proteinExistence type="inferred from homology"/>
<sequence>MIMTKQKNTLAERLNIGDEVRELKLGATFNPKNTSTAFHTIKYDFKPASVDTSRMASVDVGPNNQVTVIVPNSESSGVPHTVYKGNQREHAKECLMIYDKETGAITIEKLNHNIQVKKTRSEISSKSSHLPPQNAAIMQGQVPGQQISNGSGPSTNVASGHGPGSGAKLENSTMRITSKTKVSTGSRRNNIIDFKPRNSPMQQSSPSRPVAIHRSPQSAPAWDANNAQQTLPSIPMITDDDDFGLRAALHNGSQANTSGSSTGSAVGHSDYGSASSSSHMGKQRQAPHHGHAKRQQRSSPPMVQQQPNFGRNSYNGGNNYAQQQQHEQQRPSPYGHGNSMPMDLDSSRDHELTSKSVAHAAAVLEQQIGGALSASSSSSESDSSDSDSGSDSDDSTEDDRPSQQQQQHQHKAAQMHHQQQQQQQHHLQQQQQQQHFNQLPNLGLGSISPSYGNNHHQQQSRHHPHQQQQKQQSGIYASNGGFPNDLLQNDLQLSSNSSDEDDD</sequence>
<name>EAF_DROAN</name>
<keyword id="KW-0010">Activator</keyword>
<keyword id="KW-0217">Developmental protein</keyword>
<keyword id="KW-0539">Nucleus</keyword>
<keyword id="KW-0597">Phosphoprotein</keyword>
<keyword id="KW-1185">Reference proteome</keyword>
<keyword id="KW-0804">Transcription</keyword>
<keyword id="KW-0805">Transcription regulation</keyword>
<evidence type="ECO:0000250" key="1">
    <source>
        <dbReference type="UniProtKB" id="Q7JRJ1"/>
    </source>
</evidence>
<evidence type="ECO:0000250" key="2">
    <source>
        <dbReference type="UniProtKB" id="Q96JC9"/>
    </source>
</evidence>
<evidence type="ECO:0000255" key="3"/>
<evidence type="ECO:0000256" key="4">
    <source>
        <dbReference type="SAM" id="MobiDB-lite"/>
    </source>
</evidence>
<evidence type="ECO:0000305" key="5"/>
<evidence type="ECO:0000312" key="6">
    <source>
        <dbReference type="EMBL" id="EDV35917.1"/>
    </source>
</evidence>
<protein>
    <recommendedName>
        <fullName evidence="1">Ell-associated factor Eaf</fullName>
    </recommendedName>
</protein>
<dbReference type="EMBL" id="CH902619">
    <property type="protein sequence ID" value="EDV35917.1"/>
    <property type="status" value="ALT_SEQ"/>
    <property type="molecule type" value="Genomic_DNA"/>
</dbReference>
<dbReference type="SMR" id="B3MI72"/>
<dbReference type="FunCoup" id="B3MI72">
    <property type="interactions" value="364"/>
</dbReference>
<dbReference type="STRING" id="7217.B3MI72"/>
<dbReference type="EnsemblMetazoa" id="FBtr0382043">
    <property type="protein sequence ID" value="FBpp0342288"/>
    <property type="gene ID" value="FBgn0089269"/>
</dbReference>
<dbReference type="EnsemblMetazoa" id="FBtr0382251">
    <property type="protein sequence ID" value="FBpp0342478"/>
    <property type="gene ID" value="FBgn0089269"/>
</dbReference>
<dbReference type="EnsemblMetazoa" id="FBtr0385089">
    <property type="protein sequence ID" value="FBpp0345080"/>
    <property type="gene ID" value="FBgn0089269"/>
</dbReference>
<dbReference type="EnsemblMetazoa" id="XM_001959059.4">
    <property type="protein sequence ID" value="XP_001959095.2"/>
    <property type="gene ID" value="LOC6495085"/>
</dbReference>
<dbReference type="EnsemblMetazoa" id="XM_014907654.3">
    <property type="protein sequence ID" value="XP_014763140.1"/>
    <property type="gene ID" value="LOC6495085"/>
</dbReference>
<dbReference type="EnsemblMetazoa" id="XM_014907655.3">
    <property type="protein sequence ID" value="XP_014763141.1"/>
    <property type="gene ID" value="LOC6495085"/>
</dbReference>
<dbReference type="EnsemblMetazoa" id="XM_032450750.2">
    <property type="protein sequence ID" value="XP_032306641.1"/>
    <property type="gene ID" value="LOC6495085"/>
</dbReference>
<dbReference type="GeneID" id="6495085"/>
<dbReference type="KEGG" id="dan:6495085"/>
<dbReference type="eggNOG" id="KOG4795">
    <property type="taxonomic scope" value="Eukaryota"/>
</dbReference>
<dbReference type="InParanoid" id="B3MI72"/>
<dbReference type="OrthoDB" id="125903at2759"/>
<dbReference type="Proteomes" id="UP000007801">
    <property type="component" value="Unassembled WGS sequence"/>
</dbReference>
<dbReference type="GO" id="GO:0005654">
    <property type="term" value="C:nucleoplasm"/>
    <property type="evidence" value="ECO:0000250"/>
    <property type="project" value="UniProtKB"/>
</dbReference>
<dbReference type="GO" id="GO:0032783">
    <property type="term" value="C:super elongation complex"/>
    <property type="evidence" value="ECO:0007669"/>
    <property type="project" value="EnsemblMetazoa"/>
</dbReference>
<dbReference type="GO" id="GO:0003711">
    <property type="term" value="F:transcription elongation factor activity"/>
    <property type="evidence" value="ECO:0007669"/>
    <property type="project" value="TreeGrafter"/>
</dbReference>
<dbReference type="GO" id="GO:0034605">
    <property type="term" value="P:cellular response to heat"/>
    <property type="evidence" value="ECO:0007669"/>
    <property type="project" value="EnsemblMetazoa"/>
</dbReference>
<dbReference type="GO" id="GO:0045893">
    <property type="term" value="P:positive regulation of DNA-templated transcription"/>
    <property type="evidence" value="ECO:0000250"/>
    <property type="project" value="UniProtKB"/>
</dbReference>
<dbReference type="GO" id="GO:0006368">
    <property type="term" value="P:transcription elongation by RNA polymerase II"/>
    <property type="evidence" value="ECO:0007669"/>
    <property type="project" value="InterPro"/>
</dbReference>
<dbReference type="InterPro" id="IPR027093">
    <property type="entry name" value="EAF_fam"/>
</dbReference>
<dbReference type="InterPro" id="IPR019194">
    <property type="entry name" value="Tscrpt_elong_fac_Eaf_N"/>
</dbReference>
<dbReference type="PANTHER" id="PTHR15970">
    <property type="entry name" value="ELL-ASSOCIATED FACTOR EAF"/>
    <property type="match status" value="1"/>
</dbReference>
<dbReference type="PANTHER" id="PTHR15970:SF2">
    <property type="entry name" value="ELL-ASSOCIATED FACTOR EAF"/>
    <property type="match status" value="1"/>
</dbReference>
<dbReference type="Pfam" id="PF09816">
    <property type="entry name" value="EAF"/>
    <property type="match status" value="1"/>
</dbReference>